<dbReference type="EMBL" id="AK160686">
    <property type="protein sequence ID" value="BAE35957.1"/>
    <property type="molecule type" value="mRNA"/>
</dbReference>
<dbReference type="EMBL" id="AK165192">
    <property type="protein sequence ID" value="BAE38070.1"/>
    <property type="molecule type" value="mRNA"/>
</dbReference>
<dbReference type="EMBL" id="AK171522">
    <property type="protein sequence ID" value="BAE42505.1"/>
    <property type="molecule type" value="mRNA"/>
</dbReference>
<dbReference type="EMBL" id="AK171539">
    <property type="protein sequence ID" value="BAE42513.1"/>
    <property type="molecule type" value="mRNA"/>
</dbReference>
<dbReference type="EMBL" id="AK171911">
    <property type="protein sequence ID" value="BAE42729.1"/>
    <property type="molecule type" value="mRNA"/>
</dbReference>
<dbReference type="EMBL" id="AK220222">
    <property type="protein sequence ID" value="BAD90147.1"/>
    <property type="molecule type" value="mRNA"/>
</dbReference>
<dbReference type="EMBL" id="BC063749">
    <property type="protein sequence ID" value="AAH63749.1"/>
    <property type="molecule type" value="mRNA"/>
</dbReference>
<dbReference type="CCDS" id="CCDS29895.1">
    <molecule id="Q3TNL8-1"/>
</dbReference>
<dbReference type="RefSeq" id="NP_001001738.2">
    <molecule id="Q3TNL8-1"/>
    <property type="nucleotide sequence ID" value="NM_001001738.4"/>
</dbReference>
<dbReference type="RefSeq" id="NP_001349387.1">
    <molecule id="Q3TNL8-1"/>
    <property type="nucleotide sequence ID" value="NM_001362458.2"/>
</dbReference>
<dbReference type="RefSeq" id="NP_001349388.1">
    <molecule id="Q3TNL8-1"/>
    <property type="nucleotide sequence ID" value="NM_001362459.2"/>
</dbReference>
<dbReference type="RefSeq" id="XP_006527237.1">
    <property type="nucleotide sequence ID" value="XM_006527174.1"/>
</dbReference>
<dbReference type="RefSeq" id="XP_006527238.1">
    <property type="nucleotide sequence ID" value="XM_006527175.1"/>
</dbReference>
<dbReference type="RefSeq" id="XP_036017516.1">
    <molecule id="Q3TNL8-1"/>
    <property type="nucleotide sequence ID" value="XM_036161623.1"/>
</dbReference>
<dbReference type="BioGRID" id="240591">
    <property type="interactions" value="2"/>
</dbReference>
<dbReference type="FunCoup" id="Q3TNL8">
    <property type="interactions" value="135"/>
</dbReference>
<dbReference type="IntAct" id="Q3TNL8">
    <property type="interactions" value="1"/>
</dbReference>
<dbReference type="STRING" id="10090.ENSMUSP00000093697"/>
<dbReference type="GlyCosmos" id="Q3TNL8">
    <property type="glycosylation" value="1 site, No reported glycans"/>
</dbReference>
<dbReference type="GlyGen" id="Q3TNL8">
    <property type="glycosylation" value="1 site, 1 N-linked glycan (1 site)"/>
</dbReference>
<dbReference type="iPTMnet" id="Q3TNL8"/>
<dbReference type="PhosphoSitePlus" id="Q3TNL8"/>
<dbReference type="jPOST" id="Q3TNL8"/>
<dbReference type="PeptideAtlas" id="Q3TNL8"/>
<dbReference type="ProteomicsDB" id="301662">
    <molecule id="Q3TNL8-1"/>
</dbReference>
<dbReference type="ProteomicsDB" id="301663">
    <molecule id="Q3TNL8-2"/>
</dbReference>
<dbReference type="Pumba" id="Q3TNL8"/>
<dbReference type="Antibodypedia" id="48978">
    <property type="antibodies" value="43 antibodies from 15 providers"/>
</dbReference>
<dbReference type="DNASU" id="414801"/>
<dbReference type="Ensembl" id="ENSMUST00000095998.7">
    <molecule id="Q3TNL8-1"/>
    <property type="protein sequence ID" value="ENSMUSP00000093697.6"/>
    <property type="gene ID" value="ENSMUSG00000117975.2"/>
</dbReference>
<dbReference type="GeneID" id="414801"/>
<dbReference type="KEGG" id="mmu:414801"/>
<dbReference type="UCSC" id="uc008hvu.1">
    <molecule id="Q3TNL8-1"/>
    <property type="organism name" value="mouse"/>
</dbReference>
<dbReference type="AGR" id="MGI:3042776"/>
<dbReference type="CTD" id="85450"/>
<dbReference type="MGI" id="MGI:3042776">
    <property type="gene designation" value="Itprip"/>
</dbReference>
<dbReference type="VEuPathDB" id="HostDB:ENSMUSG00000117975"/>
<dbReference type="GeneTree" id="ENSGT01050000244827"/>
<dbReference type="HOGENOM" id="CLU_025485_2_0_1"/>
<dbReference type="InParanoid" id="Q3TNL8"/>
<dbReference type="OMA" id="CHLHCLQ"/>
<dbReference type="OrthoDB" id="9923553at2759"/>
<dbReference type="PhylomeDB" id="Q3TNL8"/>
<dbReference type="TreeFam" id="TF332277"/>
<dbReference type="BioGRID-ORCS" id="414801">
    <property type="hits" value="1 hit in 48 CRISPR screens"/>
</dbReference>
<dbReference type="ChiTaRS" id="Itprip">
    <property type="organism name" value="mouse"/>
</dbReference>
<dbReference type="PRO" id="PR:Q3TNL8"/>
<dbReference type="Proteomes" id="UP000000589">
    <property type="component" value="Chromosome 19"/>
</dbReference>
<dbReference type="RNAct" id="Q3TNL8">
    <property type="molecule type" value="protein"/>
</dbReference>
<dbReference type="Bgee" id="ENSMUSG00000117975">
    <property type="expression patterns" value="Expressed in granulocyte and 134 other cell types or tissues"/>
</dbReference>
<dbReference type="ExpressionAtlas" id="Q3TNL8">
    <property type="expression patterns" value="baseline and differential"/>
</dbReference>
<dbReference type="GO" id="GO:0005640">
    <property type="term" value="C:nuclear outer membrane"/>
    <property type="evidence" value="ECO:0000314"/>
    <property type="project" value="UniProtKB"/>
</dbReference>
<dbReference type="GO" id="GO:0005886">
    <property type="term" value="C:plasma membrane"/>
    <property type="evidence" value="ECO:0007669"/>
    <property type="project" value="UniProtKB-SubCell"/>
</dbReference>
<dbReference type="GO" id="GO:0004860">
    <property type="term" value="F:protein kinase inhibitor activity"/>
    <property type="evidence" value="ECO:0000314"/>
    <property type="project" value="MGI"/>
</dbReference>
<dbReference type="GO" id="GO:0008625">
    <property type="term" value="P:extrinsic apoptotic signaling pathway via death domain receptors"/>
    <property type="evidence" value="ECO:0000316"/>
    <property type="project" value="MGI"/>
</dbReference>
<dbReference type="GO" id="GO:1902042">
    <property type="term" value="P:negative regulation of extrinsic apoptotic signaling pathway via death domain receptors"/>
    <property type="evidence" value="ECO:0000316"/>
    <property type="project" value="MGI"/>
</dbReference>
<dbReference type="FunFam" id="1.10.1410.40:FF:000006">
    <property type="entry name" value="Inositol 1,4,5-trisphosphate receptor-interacting protein"/>
    <property type="match status" value="1"/>
</dbReference>
<dbReference type="Gene3D" id="1.10.1410.40">
    <property type="match status" value="1"/>
</dbReference>
<dbReference type="InterPro" id="IPR026250">
    <property type="entry name" value="ITPRIP-like"/>
</dbReference>
<dbReference type="InterPro" id="IPR046906">
    <property type="entry name" value="Mab-21_HhH/H2TH-like"/>
</dbReference>
<dbReference type="InterPro" id="IPR024810">
    <property type="entry name" value="MAB21L/cGLR"/>
</dbReference>
<dbReference type="PANTHER" id="PTHR10656">
    <property type="entry name" value="CELL FATE DETERMINING PROTEIN MAB21-RELATED"/>
    <property type="match status" value="1"/>
</dbReference>
<dbReference type="PANTHER" id="PTHR10656:SF8">
    <property type="entry name" value="INOSITOL 1,4,5-TRISPHOSPHATE RECEPTOR-INTERACTING PROTEIN"/>
    <property type="match status" value="1"/>
</dbReference>
<dbReference type="Pfam" id="PF20266">
    <property type="entry name" value="Mab-21_C"/>
    <property type="match status" value="1"/>
</dbReference>
<dbReference type="PRINTS" id="PR02107">
    <property type="entry name" value="INOS145TPRIP"/>
</dbReference>
<dbReference type="SMART" id="SM01265">
    <property type="entry name" value="Mab-21"/>
    <property type="match status" value="1"/>
</dbReference>
<comment type="function">
    <text evidence="1">Enhances Ca(2+)-mediated inhibition of inositol 1,4,5-triphosphate receptor (ITPR) Ca(2+) release.</text>
</comment>
<comment type="subunit">
    <text evidence="1">Interacts with ITPR.</text>
</comment>
<comment type="subcellular location">
    <subcellularLocation>
        <location evidence="1">Cell membrane</location>
        <topology evidence="2">Single-pass type I membrane protein</topology>
    </subcellularLocation>
    <subcellularLocation>
        <location evidence="3">Nucleus outer membrane</location>
        <topology evidence="2">Single-pass type I membrane protein</topology>
    </subcellularLocation>
</comment>
<comment type="alternative products">
    <event type="alternative splicing"/>
    <isoform>
        <id>Q3TNL8-1</id>
        <name>1</name>
        <sequence type="displayed"/>
    </isoform>
    <isoform>
        <id>Q3TNL8-2</id>
        <name>2</name>
        <sequence type="described" ref="VSP_026571"/>
    </isoform>
</comment>
<comment type="similarity">
    <text evidence="5">Belongs to the ITPRIP family.</text>
</comment>
<proteinExistence type="evidence at protein level"/>
<accession>Q3TNL8</accession>
<accession>Q3TAD9</accession>
<accession>Q3TB01</accession>
<accession>Q571G7</accession>
<accession>Q6P400</accession>
<keyword id="KW-0025">Alternative splicing</keyword>
<keyword id="KW-1003">Cell membrane</keyword>
<keyword id="KW-0175">Coiled coil</keyword>
<keyword id="KW-0325">Glycoprotein</keyword>
<keyword id="KW-0472">Membrane</keyword>
<keyword id="KW-0539">Nucleus</keyword>
<keyword id="KW-1185">Reference proteome</keyword>
<keyword id="KW-0732">Signal</keyword>
<keyword id="KW-0812">Transmembrane</keyword>
<keyword id="KW-1133">Transmembrane helix</keyword>
<sequence length="555" mass="63238">MAMELFRVCLVVVTAIINHPLLFPRENATIPENEEEIIRKMQEHQEKLRLEQLRLEEEVSRLEAEKEALRQVEEEQQQLEAHTAWDLWTTLCMVLFLIIEVLRQNHQEGTFPECLGGDEDELSGLGGTLLQGLPLPNRATLDHFYEHCIRSTTGDATRTQEFVEGFVDDLLEALRSTYNGKTDMELEDFIGVGSMYENWQVERPLRCHLFIPFIPPEPYSFHPEFWCSSLSTPLERQGYGQIKVTLADGNPLGCVCGKAKLEEDMLCLLYGKNRGAWPSSAGCGEMEGLLCSRESSYLDVMQVMKWFQMALTRAWHRIAHKYEFDLAFGELDTPGSLKIKFRSGKSMPFILTPVIQCNDSDLYFILQLPKEPCGGGPASSAHWLLSFAVYEREFLRMTGKALPEGACHLSCLQIASFLLSKQTRLTGPSGLSDYHLKTALLHLLLSRQASDWKASKLDVRLQDLFCFLERSLLEKKLYHFFMGNHKVPEALGLPEVVRRAEPLNLFRPFVLQRTLYRNTVDSFYEMLKNAPALISEYSLHVPSVRASPPPKAVVS</sequence>
<name>IPRI_MOUSE</name>
<organism>
    <name type="scientific">Mus musculus</name>
    <name type="common">Mouse</name>
    <dbReference type="NCBI Taxonomy" id="10090"/>
    <lineage>
        <taxon>Eukaryota</taxon>
        <taxon>Metazoa</taxon>
        <taxon>Chordata</taxon>
        <taxon>Craniata</taxon>
        <taxon>Vertebrata</taxon>
        <taxon>Euteleostomi</taxon>
        <taxon>Mammalia</taxon>
        <taxon>Eutheria</taxon>
        <taxon>Euarchontoglires</taxon>
        <taxon>Glires</taxon>
        <taxon>Rodentia</taxon>
        <taxon>Myomorpha</taxon>
        <taxon>Muroidea</taxon>
        <taxon>Muridae</taxon>
        <taxon>Murinae</taxon>
        <taxon>Mus</taxon>
        <taxon>Mus</taxon>
    </lineage>
</organism>
<gene>
    <name type="primary">Itprip</name>
    <name type="synonym">Kiaa1754</name>
</gene>
<reference key="1">
    <citation type="journal article" date="2005" name="Science">
        <title>The transcriptional landscape of the mammalian genome.</title>
        <authorList>
            <person name="Carninci P."/>
            <person name="Kasukawa T."/>
            <person name="Katayama S."/>
            <person name="Gough J."/>
            <person name="Frith M.C."/>
            <person name="Maeda N."/>
            <person name="Oyama R."/>
            <person name="Ravasi T."/>
            <person name="Lenhard B."/>
            <person name="Wells C."/>
            <person name="Kodzius R."/>
            <person name="Shimokawa K."/>
            <person name="Bajic V.B."/>
            <person name="Brenner S.E."/>
            <person name="Batalov S."/>
            <person name="Forrest A.R."/>
            <person name="Zavolan M."/>
            <person name="Davis M.J."/>
            <person name="Wilming L.G."/>
            <person name="Aidinis V."/>
            <person name="Allen J.E."/>
            <person name="Ambesi-Impiombato A."/>
            <person name="Apweiler R."/>
            <person name="Aturaliya R.N."/>
            <person name="Bailey T.L."/>
            <person name="Bansal M."/>
            <person name="Baxter L."/>
            <person name="Beisel K.W."/>
            <person name="Bersano T."/>
            <person name="Bono H."/>
            <person name="Chalk A.M."/>
            <person name="Chiu K.P."/>
            <person name="Choudhary V."/>
            <person name="Christoffels A."/>
            <person name="Clutterbuck D.R."/>
            <person name="Crowe M.L."/>
            <person name="Dalla E."/>
            <person name="Dalrymple B.P."/>
            <person name="de Bono B."/>
            <person name="Della Gatta G."/>
            <person name="di Bernardo D."/>
            <person name="Down T."/>
            <person name="Engstrom P."/>
            <person name="Fagiolini M."/>
            <person name="Faulkner G."/>
            <person name="Fletcher C.F."/>
            <person name="Fukushima T."/>
            <person name="Furuno M."/>
            <person name="Futaki S."/>
            <person name="Gariboldi M."/>
            <person name="Georgii-Hemming P."/>
            <person name="Gingeras T.R."/>
            <person name="Gojobori T."/>
            <person name="Green R.E."/>
            <person name="Gustincich S."/>
            <person name="Harbers M."/>
            <person name="Hayashi Y."/>
            <person name="Hensch T.K."/>
            <person name="Hirokawa N."/>
            <person name="Hill D."/>
            <person name="Huminiecki L."/>
            <person name="Iacono M."/>
            <person name="Ikeo K."/>
            <person name="Iwama A."/>
            <person name="Ishikawa T."/>
            <person name="Jakt M."/>
            <person name="Kanapin A."/>
            <person name="Katoh M."/>
            <person name="Kawasawa Y."/>
            <person name="Kelso J."/>
            <person name="Kitamura H."/>
            <person name="Kitano H."/>
            <person name="Kollias G."/>
            <person name="Krishnan S.P."/>
            <person name="Kruger A."/>
            <person name="Kummerfeld S.K."/>
            <person name="Kurochkin I.V."/>
            <person name="Lareau L.F."/>
            <person name="Lazarevic D."/>
            <person name="Lipovich L."/>
            <person name="Liu J."/>
            <person name="Liuni S."/>
            <person name="McWilliam S."/>
            <person name="Madan Babu M."/>
            <person name="Madera M."/>
            <person name="Marchionni L."/>
            <person name="Matsuda H."/>
            <person name="Matsuzawa S."/>
            <person name="Miki H."/>
            <person name="Mignone F."/>
            <person name="Miyake S."/>
            <person name="Morris K."/>
            <person name="Mottagui-Tabar S."/>
            <person name="Mulder N."/>
            <person name="Nakano N."/>
            <person name="Nakauchi H."/>
            <person name="Ng P."/>
            <person name="Nilsson R."/>
            <person name="Nishiguchi S."/>
            <person name="Nishikawa S."/>
            <person name="Nori F."/>
            <person name="Ohara O."/>
            <person name="Okazaki Y."/>
            <person name="Orlando V."/>
            <person name="Pang K.C."/>
            <person name="Pavan W.J."/>
            <person name="Pavesi G."/>
            <person name="Pesole G."/>
            <person name="Petrovsky N."/>
            <person name="Piazza S."/>
            <person name="Reed J."/>
            <person name="Reid J.F."/>
            <person name="Ring B.Z."/>
            <person name="Ringwald M."/>
            <person name="Rost B."/>
            <person name="Ruan Y."/>
            <person name="Salzberg S.L."/>
            <person name="Sandelin A."/>
            <person name="Schneider C."/>
            <person name="Schoenbach C."/>
            <person name="Sekiguchi K."/>
            <person name="Semple C.A."/>
            <person name="Seno S."/>
            <person name="Sessa L."/>
            <person name="Sheng Y."/>
            <person name="Shibata Y."/>
            <person name="Shimada H."/>
            <person name="Shimada K."/>
            <person name="Silva D."/>
            <person name="Sinclair B."/>
            <person name="Sperling S."/>
            <person name="Stupka E."/>
            <person name="Sugiura K."/>
            <person name="Sultana R."/>
            <person name="Takenaka Y."/>
            <person name="Taki K."/>
            <person name="Tammoja K."/>
            <person name="Tan S.L."/>
            <person name="Tang S."/>
            <person name="Taylor M.S."/>
            <person name="Tegner J."/>
            <person name="Teichmann S.A."/>
            <person name="Ueda H.R."/>
            <person name="van Nimwegen E."/>
            <person name="Verardo R."/>
            <person name="Wei C.L."/>
            <person name="Yagi K."/>
            <person name="Yamanishi H."/>
            <person name="Zabarovsky E."/>
            <person name="Zhu S."/>
            <person name="Zimmer A."/>
            <person name="Hide W."/>
            <person name="Bult C."/>
            <person name="Grimmond S.M."/>
            <person name="Teasdale R.D."/>
            <person name="Liu E.T."/>
            <person name="Brusic V."/>
            <person name="Quackenbush J."/>
            <person name="Wahlestedt C."/>
            <person name="Mattick J.S."/>
            <person name="Hume D.A."/>
            <person name="Kai C."/>
            <person name="Sasaki D."/>
            <person name="Tomaru Y."/>
            <person name="Fukuda S."/>
            <person name="Kanamori-Katayama M."/>
            <person name="Suzuki M."/>
            <person name="Aoki J."/>
            <person name="Arakawa T."/>
            <person name="Iida J."/>
            <person name="Imamura K."/>
            <person name="Itoh M."/>
            <person name="Kato T."/>
            <person name="Kawaji H."/>
            <person name="Kawagashira N."/>
            <person name="Kawashima T."/>
            <person name="Kojima M."/>
            <person name="Kondo S."/>
            <person name="Konno H."/>
            <person name="Nakano K."/>
            <person name="Ninomiya N."/>
            <person name="Nishio T."/>
            <person name="Okada M."/>
            <person name="Plessy C."/>
            <person name="Shibata K."/>
            <person name="Shiraki T."/>
            <person name="Suzuki S."/>
            <person name="Tagami M."/>
            <person name="Waki K."/>
            <person name="Watahiki A."/>
            <person name="Okamura-Oho Y."/>
            <person name="Suzuki H."/>
            <person name="Kawai J."/>
            <person name="Hayashizaki Y."/>
        </authorList>
    </citation>
    <scope>NUCLEOTIDE SEQUENCE [LARGE SCALE MRNA] (ISOFORM 1)</scope>
    <source>
        <strain>C57BL/6J</strain>
        <tissue>Dendritic cell</tissue>
        <tissue>Embryo</tissue>
        <tissue>Head</tissue>
        <tissue>Spleen</tissue>
    </source>
</reference>
<reference key="2">
    <citation type="submission" date="2005-02" db="EMBL/GenBank/DDBJ databases">
        <title>Prediction of the coding sequences of mouse homologues of KIAA gene. The complete nucleotide sequences of mouse KIAA-homologous cDNAs identified by screening of terminal sequences of cDNA clones randomly sampled from size-fractionated libraries.</title>
        <authorList>
            <person name="Okazaki N."/>
            <person name="Kikuno R.F."/>
            <person name="Ohara R."/>
            <person name="Inamoto S."/>
            <person name="Nagase T."/>
            <person name="Ohara O."/>
            <person name="Koga H."/>
        </authorList>
    </citation>
    <scope>NUCLEOTIDE SEQUENCE [LARGE SCALE MRNA] (ISOFORM 1)</scope>
    <source>
        <tissue>Fetal brain</tissue>
    </source>
</reference>
<reference key="3">
    <citation type="journal article" date="2004" name="Genome Res.">
        <title>The status, quality, and expansion of the NIH full-length cDNA project: the Mammalian Gene Collection (MGC).</title>
        <authorList>
            <consortium name="The MGC Project Team"/>
        </authorList>
    </citation>
    <scope>NUCLEOTIDE SEQUENCE [LARGE SCALE MRNA] (ISOFORM 2)</scope>
    <source>
        <strain>C57BL/6J</strain>
        <tissue>Brain</tissue>
    </source>
</reference>
<reference key="4">
    <citation type="journal article" date="2010" name="Cell">
        <title>A tissue-specific atlas of mouse protein phosphorylation and expression.</title>
        <authorList>
            <person name="Huttlin E.L."/>
            <person name="Jedrychowski M.P."/>
            <person name="Elias J.E."/>
            <person name="Goswami T."/>
            <person name="Rad R."/>
            <person name="Beausoleil S.A."/>
            <person name="Villen J."/>
            <person name="Haas W."/>
            <person name="Sowa M.E."/>
            <person name="Gygi S.P."/>
        </authorList>
    </citation>
    <scope>IDENTIFICATION BY MASS SPECTROMETRY [LARGE SCALE ANALYSIS]</scope>
    <source>
        <tissue>Spleen</tissue>
    </source>
</reference>
<reference key="5">
    <citation type="journal article" date="2019" name="Nucleus">
        <title>Identification of new transmembrane proteins concentrated at the nuclear envelope using organellar proteomics of mesenchymal cells.</title>
        <authorList>
            <person name="Cheng L.C."/>
            <person name="Baboo S."/>
            <person name="Lindsay C."/>
            <person name="Brusman L."/>
            <person name="Martinez-Bartolome S."/>
            <person name="Tapia O."/>
            <person name="Zhang X."/>
            <person name="Yates J.R. III"/>
            <person name="Gerace L."/>
        </authorList>
    </citation>
    <scope>SUBCELLULAR LOCATION</scope>
</reference>
<feature type="signal peptide" evidence="2">
    <location>
        <begin position="1"/>
        <end position="15"/>
    </location>
</feature>
<feature type="chain" id="PRO_0000293729" description="Inositol 1,4,5-trisphosphate receptor-interacting protein">
    <location>
        <begin position="16"/>
        <end position="555"/>
    </location>
</feature>
<feature type="topological domain" description="Extracellular" evidence="2">
    <location>
        <begin position="16"/>
        <end position="81"/>
    </location>
</feature>
<feature type="transmembrane region" description="Helical" evidence="2">
    <location>
        <begin position="82"/>
        <end position="102"/>
    </location>
</feature>
<feature type="topological domain" description="Cytoplasmic" evidence="2">
    <location>
        <begin position="103"/>
        <end position="555"/>
    </location>
</feature>
<feature type="coiled-coil region" evidence="2">
    <location>
        <begin position="32"/>
        <end position="84"/>
    </location>
</feature>
<feature type="glycosylation site" description="N-linked (GlcNAc...) asparagine" evidence="2">
    <location>
        <position position="27"/>
    </location>
</feature>
<feature type="splice variant" id="VSP_026571" description="In isoform 2." evidence="4">
    <location>
        <begin position="218"/>
        <end position="224"/>
    </location>
</feature>
<feature type="sequence conflict" description="In Ref. 1; BAE42729." evidence="5" ref="1">
    <original>G</original>
    <variation>E</variation>
    <location>
        <position position="275"/>
    </location>
</feature>
<feature type="sequence conflict" description="In Ref. 1; BAE42729." evidence="5" ref="1">
    <original>I</original>
    <variation>T</variation>
    <location>
        <position position="355"/>
    </location>
</feature>
<protein>
    <recommendedName>
        <fullName>Inositol 1,4,5-trisphosphate receptor-interacting protein</fullName>
    </recommendedName>
</protein>
<evidence type="ECO:0000250" key="1">
    <source>
        <dbReference type="UniProtKB" id="Q8IWB1"/>
    </source>
</evidence>
<evidence type="ECO:0000255" key="2"/>
<evidence type="ECO:0000269" key="3">
    <source>
    </source>
</evidence>
<evidence type="ECO:0000303" key="4">
    <source>
    </source>
</evidence>
<evidence type="ECO:0000305" key="5"/>